<proteinExistence type="evidence at transcript level"/>
<reference key="1">
    <citation type="journal article" date="1998" name="Cytokine">
        <title>Detection, cDNA cloning and sequencing of canine interleukin 12.</title>
        <authorList>
            <person name="Buettner M."/>
            <person name="Belke-Louis G.F."/>
            <person name="Rziha H.J."/>
            <person name="McInnes C."/>
            <person name="Kaaden O.R."/>
        </authorList>
    </citation>
    <scope>NUCLEOTIDE SEQUENCE [MRNA]</scope>
</reference>
<feature type="signal peptide" evidence="1">
    <location>
        <begin position="1"/>
        <end position="25"/>
    </location>
</feature>
<feature type="chain" id="PRO_0000015598" description="Interleukin-12 subunit alpha">
    <location>
        <begin position="26"/>
        <end position="222"/>
    </location>
</feature>
<feature type="glycosylation site" description="N-linked (GlcNAc...) asparagine" evidence="4">
    <location>
        <position position="42"/>
    </location>
</feature>
<feature type="glycosylation site" description="N-linked (GlcNAc...) asparagine" evidence="4">
    <location>
        <position position="96"/>
    </location>
</feature>
<feature type="glycosylation site" description="N-linked (GlcNAc...) asparagine" evidence="4">
    <location>
        <position position="110"/>
    </location>
</feature>
<feature type="disulfide bond" evidence="2">
    <location>
        <begin position="40"/>
        <end position="113"/>
    </location>
</feature>
<feature type="disulfide bond" evidence="1">
    <location>
        <begin position="67"/>
        <end position="199"/>
    </location>
</feature>
<feature type="disulfide bond" evidence="1">
    <location>
        <begin position="88"/>
        <end position="126"/>
    </location>
</feature>
<feature type="disulfide bond" description="Interchain (with C-200 in IL12B)" evidence="1">
    <location>
        <position position="99"/>
    </location>
</feature>
<keyword id="KW-0202">Cytokine</keyword>
<keyword id="KW-1015">Disulfide bond</keyword>
<keyword id="KW-0325">Glycoprotein</keyword>
<keyword id="KW-0339">Growth factor</keyword>
<keyword id="KW-1185">Reference proteome</keyword>
<keyword id="KW-0964">Secreted</keyword>
<keyword id="KW-0732">Signal</keyword>
<gene>
    <name type="primary">IL12A</name>
</gene>
<sequence length="222" mass="24992">MCPPRGLLLVTILVLLSHLDHLTWARSLPTASPSPGIFQCLNHSQNLLRAVSNTLQKARQTLDYIPCTSEEIDHEDITKDKTSTVEACLPLELTMNESCLASREISLITNGSCLASGKASFMTVLCLSSIYEDLKMYQMEFKAMNAKLLMDPKRQIFLDQNMLTAIDELLQALNFNSVTVPQKSSLEEPDFYKTKIKLCILLHAFRIRAVTIDRMMSYLNSS</sequence>
<organism>
    <name type="scientific">Canis lupus familiaris</name>
    <name type="common">Dog</name>
    <name type="synonym">Canis familiaris</name>
    <dbReference type="NCBI Taxonomy" id="9615"/>
    <lineage>
        <taxon>Eukaryota</taxon>
        <taxon>Metazoa</taxon>
        <taxon>Chordata</taxon>
        <taxon>Craniata</taxon>
        <taxon>Vertebrata</taxon>
        <taxon>Euteleostomi</taxon>
        <taxon>Mammalia</taxon>
        <taxon>Eutheria</taxon>
        <taxon>Laurasiatheria</taxon>
        <taxon>Carnivora</taxon>
        <taxon>Caniformia</taxon>
        <taxon>Canidae</taxon>
        <taxon>Canis</taxon>
    </lineage>
</organism>
<comment type="function">
    <text evidence="2 3">Heterodimerizes with IL12B to form the IL-12 cytokine or with EBI3/IL27B to form the IL-35 cytokine. IL-12 is primarily produced by professional antigen-presenting cells (APCs) such as B-cells and dendritic cells (DCs) as well as macrophages and granulocytes and regulates T-cell and natural killer-cell responses, induces the production of interferon-gamma (IFN-gamma), favors the differentiation of T-helper 1 (Th1) cells and is an important link between innate resistance and adaptive immunity. Mechanistically, exerts its biological effects through a receptor composed of IL12R1 and IL12R2 subunits. Binding to the receptor results in the rapid tyrosine phosphorylation of a number of cellular substrates including the JAK family kinases TYK2 and JAK2. In turn, recruited STAT4 gets phosphorylated and translocates to the nucleus where it regulates cytokine/growth factor responsive genes (By similarity). As part of IL-35, plays essential roles in maintaining the immune homeostasis of the liver microenvironment and also functions as an immune-suppressive cytokine (By similarity). Mediates biological events through unconventional receptors composed of IL12RB2 and gp130/IL6ST heterodimers or homodimers. Signaling requires the transcription factors STAT1 and STAT4, which form a unique heterodimer that binds to distinct DNA sites (By similarity).</text>
</comment>
<comment type="subunit">
    <text evidence="2 3">Heterodimer with IL12B; disulfide-linked. This heterodimer is known as interleukin IL-12. Heterodimer with EBI3/IL27B; not disulfide-linked. This heterodimer is known as interleukin IL-35. Interacts with NBR1; this interaction promotes IL-12 secretion (By similarity).</text>
</comment>
<comment type="subcellular location">
    <subcellularLocation>
        <location evidence="2">Secreted</location>
    </subcellularLocation>
</comment>
<comment type="similarity">
    <text evidence="5">Belongs to the IL-6 superfamily.</text>
</comment>
<evidence type="ECO:0000250" key="1"/>
<evidence type="ECO:0000250" key="2">
    <source>
        <dbReference type="UniProtKB" id="P29459"/>
    </source>
</evidence>
<evidence type="ECO:0000250" key="3">
    <source>
        <dbReference type="UniProtKB" id="P43431"/>
    </source>
</evidence>
<evidence type="ECO:0000255" key="4"/>
<evidence type="ECO:0000305" key="5"/>
<protein>
    <recommendedName>
        <fullName>Interleukin-12 subunit alpha</fullName>
        <shortName>IL-12A</shortName>
    </recommendedName>
    <alternativeName>
        <fullName>Cytotoxic lymphocyte maturation factor 35 kDa subunit</fullName>
        <shortName>CLMF p35</shortName>
    </alternativeName>
    <alternativeName>
        <fullName>IL-12 subunit p35</fullName>
    </alternativeName>
</protein>
<name>IL12A_CANLF</name>
<accession>Q28267</accession>
<dbReference type="EMBL" id="U49085">
    <property type="protein sequence ID" value="AAA92058.1"/>
    <property type="molecule type" value="mRNA"/>
</dbReference>
<dbReference type="SMR" id="Q28267"/>
<dbReference type="FunCoup" id="Q28267">
    <property type="interactions" value="23"/>
</dbReference>
<dbReference type="STRING" id="9615.ENSCAFP00000020931"/>
<dbReference type="GlyCosmos" id="Q28267">
    <property type="glycosylation" value="3 sites, No reported glycans"/>
</dbReference>
<dbReference type="PaxDb" id="9612-ENSCAFP00000020931"/>
<dbReference type="eggNOG" id="ENOG502S8JN">
    <property type="taxonomic scope" value="Eukaryota"/>
</dbReference>
<dbReference type="InParanoid" id="Q28267"/>
<dbReference type="OrthoDB" id="9893660at2759"/>
<dbReference type="Proteomes" id="UP000002254">
    <property type="component" value="Unplaced"/>
</dbReference>
<dbReference type="Proteomes" id="UP000694429">
    <property type="component" value="Unplaced"/>
</dbReference>
<dbReference type="Proteomes" id="UP000694542">
    <property type="component" value="Unplaced"/>
</dbReference>
<dbReference type="Proteomes" id="UP000805418">
    <property type="component" value="Unplaced"/>
</dbReference>
<dbReference type="GO" id="GO:0043514">
    <property type="term" value="C:interleukin-12 complex"/>
    <property type="evidence" value="ECO:0000318"/>
    <property type="project" value="GO_Central"/>
</dbReference>
<dbReference type="GO" id="GO:0005125">
    <property type="term" value="F:cytokine activity"/>
    <property type="evidence" value="ECO:0007669"/>
    <property type="project" value="UniProtKB-KW"/>
</dbReference>
<dbReference type="GO" id="GO:0008083">
    <property type="term" value="F:growth factor activity"/>
    <property type="evidence" value="ECO:0007669"/>
    <property type="project" value="UniProtKB-KW"/>
</dbReference>
<dbReference type="GO" id="GO:0005143">
    <property type="term" value="F:interleukin-12 receptor binding"/>
    <property type="evidence" value="ECO:0000318"/>
    <property type="project" value="GO_Central"/>
</dbReference>
<dbReference type="GO" id="GO:0006955">
    <property type="term" value="P:immune response"/>
    <property type="evidence" value="ECO:0007669"/>
    <property type="project" value="InterPro"/>
</dbReference>
<dbReference type="GO" id="GO:0035722">
    <property type="term" value="P:interleukin-12-mediated signaling pathway"/>
    <property type="evidence" value="ECO:0000318"/>
    <property type="project" value="GO_Central"/>
</dbReference>
<dbReference type="FunFam" id="1.20.1250.10:FF:000020">
    <property type="entry name" value="Interleukin-12 subunit alpha"/>
    <property type="match status" value="1"/>
</dbReference>
<dbReference type="Gene3D" id="1.20.1250.10">
    <property type="match status" value="1"/>
</dbReference>
<dbReference type="InterPro" id="IPR009079">
    <property type="entry name" value="4_helix_cytokine-like_core"/>
</dbReference>
<dbReference type="InterPro" id="IPR050676">
    <property type="entry name" value="IL-12"/>
</dbReference>
<dbReference type="InterPro" id="IPR004281">
    <property type="entry name" value="IL-12_alpha"/>
</dbReference>
<dbReference type="PANTHER" id="PTHR48485:SF1">
    <property type="entry name" value="INTERLEUKIN-12 SUBUNIT ALPHA"/>
    <property type="match status" value="1"/>
</dbReference>
<dbReference type="PANTHER" id="PTHR48485">
    <property type="entry name" value="INTERLEUKIN-12 SUBUNIT BETA-RELATED"/>
    <property type="match status" value="1"/>
</dbReference>
<dbReference type="Pfam" id="PF03039">
    <property type="entry name" value="IL12"/>
    <property type="match status" value="1"/>
</dbReference>
<dbReference type="SUPFAM" id="SSF47266">
    <property type="entry name" value="4-helical cytokines"/>
    <property type="match status" value="1"/>
</dbReference>